<name>HBEGF_MOUSE</name>
<evidence type="ECO:0000250" key="1"/>
<evidence type="ECO:0000255" key="2"/>
<evidence type="ECO:0000255" key="3">
    <source>
        <dbReference type="PROSITE-ProRule" id="PRU00076"/>
    </source>
</evidence>
<evidence type="ECO:0000256" key="4">
    <source>
        <dbReference type="SAM" id="MobiDB-lite"/>
    </source>
</evidence>
<feature type="signal peptide" evidence="2">
    <location>
        <begin position="1"/>
        <end position="23"/>
    </location>
</feature>
<feature type="chain" id="PRO_0000302804" description="Proheparin-binding EGF-like growth factor">
    <location>
        <begin position="24"/>
        <end position="208"/>
    </location>
</feature>
<feature type="propeptide" id="PRO_0000007614" evidence="1">
    <location>
        <begin position="24"/>
        <end position="62"/>
    </location>
</feature>
<feature type="chain" id="PRO_0000007615" description="Heparin-binding EGF-like growth factor">
    <location>
        <begin position="63"/>
        <end position="148"/>
    </location>
</feature>
<feature type="propeptide" id="PRO_0000007616" description="C-terminal" evidence="2">
    <location>
        <begin position="149"/>
        <end position="208"/>
    </location>
</feature>
<feature type="topological domain" description="Extracellular" evidence="2">
    <location>
        <begin position="24"/>
        <end position="160"/>
    </location>
</feature>
<feature type="transmembrane region" description="Helical" evidence="2">
    <location>
        <begin position="161"/>
        <end position="184"/>
    </location>
</feature>
<feature type="topological domain" description="Cytoplasmic" evidence="2">
    <location>
        <begin position="185"/>
        <end position="208"/>
    </location>
</feature>
<feature type="domain" description="EGF-like" evidence="3">
    <location>
        <begin position="104"/>
        <end position="144"/>
    </location>
</feature>
<feature type="region of interest" description="Disordered" evidence="4">
    <location>
        <begin position="35"/>
        <end position="57"/>
    </location>
</feature>
<feature type="region of interest" description="Disordered" evidence="4">
    <location>
        <begin position="80"/>
        <end position="104"/>
    </location>
</feature>
<feature type="compositionally biased region" description="Polar residues" evidence="4">
    <location>
        <begin position="36"/>
        <end position="51"/>
    </location>
</feature>
<feature type="compositionally biased region" description="Basic residues" evidence="4">
    <location>
        <begin position="91"/>
        <end position="102"/>
    </location>
</feature>
<feature type="glycosylation site" description="O-linked (GalNAc...) threonine" evidence="1">
    <location>
        <position position="85"/>
    </location>
</feature>
<feature type="disulfide bond" evidence="3">
    <location>
        <begin position="108"/>
        <end position="121"/>
    </location>
</feature>
<feature type="disulfide bond" evidence="3">
    <location>
        <begin position="116"/>
        <end position="132"/>
    </location>
</feature>
<feature type="disulfide bond" evidence="3">
    <location>
        <begin position="134"/>
        <end position="143"/>
    </location>
</feature>
<comment type="function">
    <text>Growth factor that mediates its effects via EGFR, ERBB2 and ERBB4. Required for normal cardiac valve formation and normal heart function. Promotes smooth muscle cell proliferation. May be involved in macrophage-mediated cellular proliferation. It is mitogenic for fibroblasts, but not endothelial cells. It is able to bind EGF receptor/EGFR with higher affinity than EGF itself and is a far more potent mitogen for smooth muscle cells than EGF. Also acts as a diphtheria toxin receptor.</text>
</comment>
<comment type="subunit">
    <text evidence="1">Interacts with FBLN1 (By similarity). Interacts with EGFR and ERBB4.</text>
</comment>
<comment type="subcellular location">
    <molecule>Heparin-binding EGF-like growth factor</molecule>
    <subcellularLocation>
        <location>Secreted</location>
        <location>Extracellular space</location>
    </subcellularLocation>
    <text>Mature HB-EGF is released into the extracellular space and probably binds to a receptor.</text>
</comment>
<comment type="subcellular location">
    <molecule>Proheparin-binding EGF-like growth factor</molecule>
    <subcellularLocation>
        <location>Cell membrane</location>
        <topology>Single-pass type I membrane protein</topology>
    </subcellularLocation>
</comment>
<comment type="tissue specificity">
    <text>Most abundant in kidney, skeletal muscle, lung, spleen, brain and heart.</text>
</comment>
<comment type="PTM">
    <text evidence="1">O-glycosylated.</text>
</comment>
<proteinExistence type="evidence at transcript level"/>
<reference key="1">
    <citation type="journal article" date="1993" name="Biochem. Biophys. Res. Commun.">
        <title>Heparin-binding EGF-like growth factor: characterization of rat and mouse cDNA clones, protein domain conservation across species, and transcript expression in tissues.</title>
        <authorList>
            <person name="Abraham J.A."/>
            <person name="Damm D."/>
            <person name="Bajardi A."/>
            <person name="Miller J."/>
            <person name="Klagsbrun M."/>
            <person name="Ezekowitz R.A.B."/>
        </authorList>
    </citation>
    <scope>NUCLEOTIDE SEQUENCE [MRNA]</scope>
    <source>
        <tissue>Macrophage</tissue>
    </source>
</reference>
<reference key="2">
    <citation type="journal article" date="1996" name="Gene">
        <title>Characterization of the gene encoding murine heparin-binding epidermal growth factor-like growth factor.</title>
        <authorList>
            <person name="Harding P.A."/>
            <person name="Brigstock D.R."/>
            <person name="Shen L."/>
            <person name="Crissman-Combs M.A."/>
            <person name="Besner G.E."/>
        </authorList>
    </citation>
    <scope>NUCLEOTIDE SEQUENCE [GENOMIC DNA]</scope>
    <source>
        <strain>129/SvJ</strain>
    </source>
</reference>
<dbReference type="EMBL" id="L36027">
    <property type="protein sequence ID" value="AAC42069.1"/>
    <property type="molecule type" value="Genomic_DNA"/>
</dbReference>
<dbReference type="EMBL" id="L36024">
    <property type="protein sequence ID" value="AAC42069.1"/>
    <property type="status" value="JOINED"/>
    <property type="molecule type" value="Genomic_DNA"/>
</dbReference>
<dbReference type="EMBL" id="L36025">
    <property type="protein sequence ID" value="AAC42069.1"/>
    <property type="status" value="JOINED"/>
    <property type="molecule type" value="Genomic_DNA"/>
</dbReference>
<dbReference type="EMBL" id="L36026">
    <property type="protein sequence ID" value="AAC42069.1"/>
    <property type="status" value="JOINED"/>
    <property type="molecule type" value="Genomic_DNA"/>
</dbReference>
<dbReference type="EMBL" id="L07264">
    <property type="protein sequence ID" value="AAA37542.1"/>
    <property type="molecule type" value="mRNA"/>
</dbReference>
<dbReference type="EMBL" id="U39192">
    <property type="protein sequence ID" value="AAC52617.1"/>
    <property type="molecule type" value="Genomic_DNA"/>
</dbReference>
<dbReference type="EMBL" id="U39189">
    <property type="protein sequence ID" value="AAC52617.1"/>
    <property type="status" value="JOINED"/>
    <property type="molecule type" value="Genomic_DNA"/>
</dbReference>
<dbReference type="EMBL" id="U39190">
    <property type="protein sequence ID" value="AAC52617.1"/>
    <property type="status" value="JOINED"/>
    <property type="molecule type" value="Genomic_DNA"/>
</dbReference>
<dbReference type="EMBL" id="U39191">
    <property type="protein sequence ID" value="AAC52617.1"/>
    <property type="status" value="JOINED"/>
    <property type="molecule type" value="Genomic_DNA"/>
</dbReference>
<dbReference type="CCDS" id="CCDS29153.1"/>
<dbReference type="PIR" id="JC1410">
    <property type="entry name" value="JC1410"/>
</dbReference>
<dbReference type="RefSeq" id="NP_034545.1">
    <property type="nucleotide sequence ID" value="NM_010415.2"/>
</dbReference>
<dbReference type="SMR" id="Q06186"/>
<dbReference type="FunCoup" id="Q06186">
    <property type="interactions" value="593"/>
</dbReference>
<dbReference type="STRING" id="10090.ENSMUSP00000025363"/>
<dbReference type="GlyCosmos" id="Q06186">
    <property type="glycosylation" value="1 site, No reported glycans"/>
</dbReference>
<dbReference type="GlyGen" id="Q06186">
    <property type="glycosylation" value="1 site"/>
</dbReference>
<dbReference type="iPTMnet" id="Q06186"/>
<dbReference type="PhosphoSitePlus" id="Q06186"/>
<dbReference type="PaxDb" id="10090-ENSMUSP00000025363"/>
<dbReference type="PeptideAtlas" id="Q06186"/>
<dbReference type="ProteomicsDB" id="271492"/>
<dbReference type="Antibodypedia" id="26845">
    <property type="antibodies" value="462 antibodies from 35 providers"/>
</dbReference>
<dbReference type="DNASU" id="15200"/>
<dbReference type="Ensembl" id="ENSMUST00000025363.7">
    <property type="protein sequence ID" value="ENSMUSP00000025363.6"/>
    <property type="gene ID" value="ENSMUSG00000024486.7"/>
</dbReference>
<dbReference type="GeneID" id="15200"/>
<dbReference type="KEGG" id="mmu:15200"/>
<dbReference type="UCSC" id="uc008enl.2">
    <property type="organism name" value="mouse"/>
</dbReference>
<dbReference type="AGR" id="MGI:96070"/>
<dbReference type="CTD" id="1839"/>
<dbReference type="MGI" id="MGI:96070">
    <property type="gene designation" value="Hbegf"/>
</dbReference>
<dbReference type="VEuPathDB" id="HostDB:ENSMUSG00000024486"/>
<dbReference type="eggNOG" id="ENOG502S0ZP">
    <property type="taxonomic scope" value="Eukaryota"/>
</dbReference>
<dbReference type="GeneTree" id="ENSGT00940000156901"/>
<dbReference type="HOGENOM" id="CLU_096527_2_0_1"/>
<dbReference type="InParanoid" id="Q06186"/>
<dbReference type="OMA" id="PSCICQE"/>
<dbReference type="OrthoDB" id="8780145at2759"/>
<dbReference type="PhylomeDB" id="Q06186"/>
<dbReference type="TreeFam" id="TF332773"/>
<dbReference type="Reactome" id="R-MMU-1227986">
    <property type="pathway name" value="Signaling by ERBB2"/>
</dbReference>
<dbReference type="Reactome" id="R-MMU-1236394">
    <property type="pathway name" value="Signaling by ERBB4"/>
</dbReference>
<dbReference type="Reactome" id="R-MMU-1250196">
    <property type="pathway name" value="SHC1 events in ERBB2 signaling"/>
</dbReference>
<dbReference type="Reactome" id="R-MMU-1250342">
    <property type="pathway name" value="PI3K events in ERBB4 signaling"/>
</dbReference>
<dbReference type="Reactome" id="R-MMU-1250347">
    <property type="pathway name" value="SHC1 events in ERBB4 signaling"/>
</dbReference>
<dbReference type="Reactome" id="R-MMU-1257604">
    <property type="pathway name" value="PIP3 activates AKT signaling"/>
</dbReference>
<dbReference type="Reactome" id="R-MMU-177929">
    <property type="pathway name" value="Signaling by EGFR"/>
</dbReference>
<dbReference type="Reactome" id="R-MMU-179812">
    <property type="pathway name" value="GRB2 events in EGFR signaling"/>
</dbReference>
<dbReference type="Reactome" id="R-MMU-180292">
    <property type="pathway name" value="GAB1 signalosome"/>
</dbReference>
<dbReference type="Reactome" id="R-MMU-180336">
    <property type="pathway name" value="SHC1 events in EGFR signaling"/>
</dbReference>
<dbReference type="Reactome" id="R-MMU-182971">
    <property type="pathway name" value="EGFR downregulation"/>
</dbReference>
<dbReference type="Reactome" id="R-MMU-1963640">
    <property type="pathway name" value="GRB2 events in ERBB2 signaling"/>
</dbReference>
<dbReference type="Reactome" id="R-MMU-1963642">
    <property type="pathway name" value="PI3K events in ERBB2 signaling"/>
</dbReference>
<dbReference type="Reactome" id="R-MMU-212718">
    <property type="pathway name" value="EGFR interacts with phospholipase C-gamma"/>
</dbReference>
<dbReference type="Reactome" id="R-MMU-2179392">
    <property type="pathway name" value="EGFR Transactivation by Gastrin"/>
</dbReference>
<dbReference type="Reactome" id="R-MMU-5673001">
    <property type="pathway name" value="RAF/MAP kinase cascade"/>
</dbReference>
<dbReference type="Reactome" id="R-MMU-6785631">
    <property type="pathway name" value="ERBB2 Regulates Cell Motility"/>
</dbReference>
<dbReference type="Reactome" id="R-MMU-6811558">
    <property type="pathway name" value="PI5P, PP2A and IER3 Regulate PI3K/AKT Signaling"/>
</dbReference>
<dbReference type="Reactome" id="R-MMU-8847993">
    <property type="pathway name" value="ERBB2 Activates PTK6 Signaling"/>
</dbReference>
<dbReference type="Reactome" id="R-MMU-8856825">
    <property type="pathway name" value="Cargo recognition for clathrin-mediated endocytosis"/>
</dbReference>
<dbReference type="Reactome" id="R-MMU-8856828">
    <property type="pathway name" value="Clathrin-mediated endocytosis"/>
</dbReference>
<dbReference type="Reactome" id="R-MMU-8857538">
    <property type="pathway name" value="PTK6 promotes HIF1A stabilization"/>
</dbReference>
<dbReference type="Reactome" id="R-MMU-8863795">
    <property type="pathway name" value="Downregulation of ERBB2 signaling"/>
</dbReference>
<dbReference type="Reactome" id="R-MMU-9009391">
    <property type="pathway name" value="Extra-nuclear estrogen signaling"/>
</dbReference>
<dbReference type="BioGRID-ORCS" id="15200">
    <property type="hits" value="3 hits in 79 CRISPR screens"/>
</dbReference>
<dbReference type="ChiTaRS" id="Hbegf">
    <property type="organism name" value="mouse"/>
</dbReference>
<dbReference type="PRO" id="PR:Q06186"/>
<dbReference type="Proteomes" id="UP000000589">
    <property type="component" value="Chromosome 18"/>
</dbReference>
<dbReference type="RNAct" id="Q06186">
    <property type="molecule type" value="protein"/>
</dbReference>
<dbReference type="Bgee" id="ENSMUSG00000024486">
    <property type="expression patterns" value="Expressed in tarsal region and 227 other cell types or tissues"/>
</dbReference>
<dbReference type="ExpressionAtlas" id="Q06186">
    <property type="expression patterns" value="baseline and differential"/>
</dbReference>
<dbReference type="GO" id="GO:0009986">
    <property type="term" value="C:cell surface"/>
    <property type="evidence" value="ECO:0007669"/>
    <property type="project" value="Ensembl"/>
</dbReference>
<dbReference type="GO" id="GO:0005576">
    <property type="term" value="C:extracellular region"/>
    <property type="evidence" value="ECO:0000304"/>
    <property type="project" value="Reactome"/>
</dbReference>
<dbReference type="GO" id="GO:0005615">
    <property type="term" value="C:extracellular space"/>
    <property type="evidence" value="ECO:0000314"/>
    <property type="project" value="BHF-UCL"/>
</dbReference>
<dbReference type="GO" id="GO:0005886">
    <property type="term" value="C:plasma membrane"/>
    <property type="evidence" value="ECO:0000314"/>
    <property type="project" value="BHF-UCL"/>
</dbReference>
<dbReference type="GO" id="GO:0005154">
    <property type="term" value="F:epidermal growth factor receptor binding"/>
    <property type="evidence" value="ECO:0000314"/>
    <property type="project" value="UniProtKB"/>
</dbReference>
<dbReference type="GO" id="GO:0008083">
    <property type="term" value="F:growth factor activity"/>
    <property type="evidence" value="ECO:0000314"/>
    <property type="project" value="UniProtKB"/>
</dbReference>
<dbReference type="GO" id="GO:0008201">
    <property type="term" value="F:heparin binding"/>
    <property type="evidence" value="ECO:0000314"/>
    <property type="project" value="UniProtKB"/>
</dbReference>
<dbReference type="GO" id="GO:0048018">
    <property type="term" value="F:receptor ligand activity"/>
    <property type="evidence" value="ECO:0000314"/>
    <property type="project" value="MGI"/>
</dbReference>
<dbReference type="GO" id="GO:0030297">
    <property type="term" value="F:transmembrane receptor protein tyrosine kinase activator activity"/>
    <property type="evidence" value="ECO:0000314"/>
    <property type="project" value="MGI"/>
</dbReference>
<dbReference type="GO" id="GO:0001525">
    <property type="term" value="P:angiogenesis"/>
    <property type="evidence" value="ECO:0000303"/>
    <property type="project" value="UniProtKB"/>
</dbReference>
<dbReference type="GO" id="GO:0001832">
    <property type="term" value="P:blastocyst growth"/>
    <property type="evidence" value="ECO:0000304"/>
    <property type="project" value="UniProtKB"/>
</dbReference>
<dbReference type="GO" id="GO:0060326">
    <property type="term" value="P:cell chemotaxis"/>
    <property type="evidence" value="ECO:0007669"/>
    <property type="project" value="Ensembl"/>
</dbReference>
<dbReference type="GO" id="GO:0016477">
    <property type="term" value="P:cell migration"/>
    <property type="evidence" value="ECO:0000315"/>
    <property type="project" value="UniProtKB"/>
</dbReference>
<dbReference type="GO" id="GO:0007173">
    <property type="term" value="P:epidermal growth factor receptor signaling pathway"/>
    <property type="evidence" value="ECO:0000314"/>
    <property type="project" value="MGI"/>
</dbReference>
<dbReference type="GO" id="GO:0038134">
    <property type="term" value="P:ERBB2-EGFR signaling pathway"/>
    <property type="evidence" value="ECO:0000315"/>
    <property type="project" value="MGI"/>
</dbReference>
<dbReference type="GO" id="GO:0038135">
    <property type="term" value="P:ERBB2-ERBB4 signaling pathway"/>
    <property type="evidence" value="ECO:0000315"/>
    <property type="project" value="MGI"/>
</dbReference>
<dbReference type="GO" id="GO:0030307">
    <property type="term" value="P:positive regulation of cell growth"/>
    <property type="evidence" value="ECO:0007669"/>
    <property type="project" value="Ensembl"/>
</dbReference>
<dbReference type="GO" id="GO:0008284">
    <property type="term" value="P:positive regulation of cell population proliferation"/>
    <property type="evidence" value="ECO:0000314"/>
    <property type="project" value="MGI"/>
</dbReference>
<dbReference type="GO" id="GO:0051549">
    <property type="term" value="P:positive regulation of keratinocyte migration"/>
    <property type="evidence" value="ECO:0000315"/>
    <property type="project" value="UniProtKB"/>
</dbReference>
<dbReference type="GO" id="GO:0051897">
    <property type="term" value="P:positive regulation of phosphatidylinositol 3-kinase/protein kinase B signal transduction"/>
    <property type="evidence" value="ECO:0007669"/>
    <property type="project" value="Ensembl"/>
</dbReference>
<dbReference type="GO" id="GO:0048661">
    <property type="term" value="P:positive regulation of smooth muscle cell proliferation"/>
    <property type="evidence" value="ECO:0000314"/>
    <property type="project" value="UniProtKB"/>
</dbReference>
<dbReference type="GO" id="GO:0090303">
    <property type="term" value="P:positive regulation of wound healing"/>
    <property type="evidence" value="ECO:0007669"/>
    <property type="project" value="Ensembl"/>
</dbReference>
<dbReference type="GO" id="GO:0008016">
    <property type="term" value="P:regulation of heart contraction"/>
    <property type="evidence" value="ECO:0000315"/>
    <property type="project" value="MGI"/>
</dbReference>
<dbReference type="GO" id="GO:0035313">
    <property type="term" value="P:wound healing, spreading of epidermal cells"/>
    <property type="evidence" value="ECO:0000315"/>
    <property type="project" value="UniProtKB"/>
</dbReference>
<dbReference type="FunFam" id="2.10.25.10:FF:000158">
    <property type="entry name" value="proheparin-binding EGF-like growth factor"/>
    <property type="match status" value="1"/>
</dbReference>
<dbReference type="Gene3D" id="2.10.25.10">
    <property type="entry name" value="Laminin"/>
    <property type="match status" value="1"/>
</dbReference>
<dbReference type="InterPro" id="IPR000742">
    <property type="entry name" value="EGF-like_dom"/>
</dbReference>
<dbReference type="PANTHER" id="PTHR10740:SF4">
    <property type="entry name" value="PROHEPARIN-BINDING EGF-LIKE GROWTH FACTOR"/>
    <property type="match status" value="1"/>
</dbReference>
<dbReference type="PANTHER" id="PTHR10740">
    <property type="entry name" value="TRANSFORMING GROWTH FACTOR ALPHA"/>
    <property type="match status" value="1"/>
</dbReference>
<dbReference type="Pfam" id="PF00008">
    <property type="entry name" value="EGF"/>
    <property type="match status" value="1"/>
</dbReference>
<dbReference type="SUPFAM" id="SSF57196">
    <property type="entry name" value="EGF/Laminin"/>
    <property type="match status" value="1"/>
</dbReference>
<dbReference type="PROSITE" id="PS00022">
    <property type="entry name" value="EGF_1"/>
    <property type="match status" value="1"/>
</dbReference>
<dbReference type="PROSITE" id="PS01186">
    <property type="entry name" value="EGF_2"/>
    <property type="match status" value="1"/>
</dbReference>
<dbReference type="PROSITE" id="PS50026">
    <property type="entry name" value="EGF_3"/>
    <property type="match status" value="1"/>
</dbReference>
<accession>Q06186</accession>
<organism>
    <name type="scientific">Mus musculus</name>
    <name type="common">Mouse</name>
    <dbReference type="NCBI Taxonomy" id="10090"/>
    <lineage>
        <taxon>Eukaryota</taxon>
        <taxon>Metazoa</taxon>
        <taxon>Chordata</taxon>
        <taxon>Craniata</taxon>
        <taxon>Vertebrata</taxon>
        <taxon>Euteleostomi</taxon>
        <taxon>Mammalia</taxon>
        <taxon>Eutheria</taxon>
        <taxon>Euarchontoglires</taxon>
        <taxon>Glires</taxon>
        <taxon>Rodentia</taxon>
        <taxon>Myomorpha</taxon>
        <taxon>Muroidea</taxon>
        <taxon>Muridae</taxon>
        <taxon>Murinae</taxon>
        <taxon>Mus</taxon>
        <taxon>Mus</taxon>
    </lineage>
</organism>
<keyword id="KW-1003">Cell membrane</keyword>
<keyword id="KW-1015">Disulfide bond</keyword>
<keyword id="KW-0245">EGF-like domain</keyword>
<keyword id="KW-0325">Glycoprotein</keyword>
<keyword id="KW-0339">Growth factor</keyword>
<keyword id="KW-0358">Heparin-binding</keyword>
<keyword id="KW-0472">Membrane</keyword>
<keyword id="KW-1185">Reference proteome</keyword>
<keyword id="KW-0964">Secreted</keyword>
<keyword id="KW-0732">Signal</keyword>
<keyword id="KW-0812">Transmembrane</keyword>
<keyword id="KW-1133">Transmembrane helix</keyword>
<protein>
    <recommendedName>
        <fullName>Proheparin-binding EGF-like growth factor</fullName>
    </recommendedName>
    <component>
        <recommendedName>
            <fullName>Heparin-binding EGF-like growth factor</fullName>
            <shortName>HB-EGF</shortName>
            <shortName>HBEGF</shortName>
        </recommendedName>
    </component>
</protein>
<sequence length="208" mass="22808">MKLLPSVMLKLFLAAVLSALVTGESLERLRRGLAAATSNPDPPTGSTNQLLPTGGDRAQGVQDLEGTDLNLFKVAFSSKPQGLATPSKERNGKKKKKGKGLGKKRDPCLRKYKDYCIHGECRYLQEFRTPSCKCLPGYHGHRCHGLTLPVENPLYTYDHTTVLAVVAVVLSSVCLLVIVGLLMFRYHRRGGYDLESEEKVKLGVASSH</sequence>
<gene>
    <name type="primary">Hbegf</name>
    <name type="synonym">Dtr</name>
    <name type="synonym">Hegfl</name>
</gene>